<protein>
    <recommendedName>
        <fullName evidence="1">Aspartate carbamoyltransferase catalytic subunit</fullName>
        <ecNumber evidence="1">2.1.3.2</ecNumber>
    </recommendedName>
    <alternativeName>
        <fullName evidence="1">Aspartate transcarbamylase</fullName>
        <shortName evidence="1">ATCase</shortName>
    </alternativeName>
</protein>
<name>PYRB_BIFAA</name>
<sequence length="320" mass="35386">MVGKSVITLDDLSIRQIQEMLHKAQYIDSHRKEVAHTCEGRVLATLFYEPSTRTRLSFETAMLRLGGKVIGFAGAQLASVTKGETIADTLKTVSNYVDVVAIRHPKEGAALVASRAASVPVINAGDGGHMHPTQTLADLATLQSRFGRVTNLTVGLCGDLTFGRTVHSLIETLCRFGNVNFVLISPDELKTPQYVLDRINATESCSYTEVKDLVSVIGDLDVLYMTRVQKERFFNEDDYLRLRDTYILDEAKMAYAKKDMAVLHPLPRVNEIAVEVDDDPRAAYFEQVKNGMLMRMALESSVVGDELPGYEPLAAKEVEA</sequence>
<gene>
    <name evidence="1" type="primary">pyrB</name>
    <name type="ordered locus">BAD_0759</name>
</gene>
<reference key="1">
    <citation type="submission" date="2006-12" db="EMBL/GenBank/DDBJ databases">
        <title>Bifidobacterium adolescentis complete genome sequence.</title>
        <authorList>
            <person name="Suzuki T."/>
            <person name="Tsuda Y."/>
            <person name="Kanou N."/>
            <person name="Inoue T."/>
            <person name="Kumazaki K."/>
            <person name="Nagano S."/>
            <person name="Hirai S."/>
            <person name="Tanaka K."/>
            <person name="Watanabe K."/>
        </authorList>
    </citation>
    <scope>NUCLEOTIDE SEQUENCE [LARGE SCALE GENOMIC DNA]</scope>
    <source>
        <strain>ATCC 15703 / DSM 20083 / NCTC 11814 / E194a</strain>
    </source>
</reference>
<evidence type="ECO:0000255" key="1">
    <source>
        <dbReference type="HAMAP-Rule" id="MF_00001"/>
    </source>
</evidence>
<evidence type="ECO:0000305" key="2"/>
<dbReference type="EC" id="2.1.3.2" evidence="1"/>
<dbReference type="EMBL" id="AP009256">
    <property type="protein sequence ID" value="BAF39540.1"/>
    <property type="status" value="ALT_INIT"/>
    <property type="molecule type" value="Genomic_DNA"/>
</dbReference>
<dbReference type="SMR" id="A1A1F7"/>
<dbReference type="STRING" id="367928.BAD_0759"/>
<dbReference type="PaxDb" id="1680-BADO_0807"/>
<dbReference type="KEGG" id="bad:BAD_0759"/>
<dbReference type="HOGENOM" id="CLU_043846_1_2_11"/>
<dbReference type="UniPathway" id="UPA00070">
    <property type="reaction ID" value="UER00116"/>
</dbReference>
<dbReference type="Proteomes" id="UP000008702">
    <property type="component" value="Chromosome"/>
</dbReference>
<dbReference type="GO" id="GO:0016597">
    <property type="term" value="F:amino acid binding"/>
    <property type="evidence" value="ECO:0007669"/>
    <property type="project" value="InterPro"/>
</dbReference>
<dbReference type="GO" id="GO:0004070">
    <property type="term" value="F:aspartate carbamoyltransferase activity"/>
    <property type="evidence" value="ECO:0007669"/>
    <property type="project" value="UniProtKB-UniRule"/>
</dbReference>
<dbReference type="GO" id="GO:0006207">
    <property type="term" value="P:'de novo' pyrimidine nucleobase biosynthetic process"/>
    <property type="evidence" value="ECO:0007669"/>
    <property type="project" value="InterPro"/>
</dbReference>
<dbReference type="GO" id="GO:0044205">
    <property type="term" value="P:'de novo' UMP biosynthetic process"/>
    <property type="evidence" value="ECO:0007669"/>
    <property type="project" value="UniProtKB-UniRule"/>
</dbReference>
<dbReference type="GO" id="GO:0006520">
    <property type="term" value="P:amino acid metabolic process"/>
    <property type="evidence" value="ECO:0007669"/>
    <property type="project" value="InterPro"/>
</dbReference>
<dbReference type="FunFam" id="3.40.50.1370:FF:000002">
    <property type="entry name" value="Aspartate carbamoyltransferase 2"/>
    <property type="match status" value="1"/>
</dbReference>
<dbReference type="Gene3D" id="3.40.50.1370">
    <property type="entry name" value="Aspartate/ornithine carbamoyltransferase"/>
    <property type="match status" value="2"/>
</dbReference>
<dbReference type="HAMAP" id="MF_00001">
    <property type="entry name" value="Asp_carb_tr"/>
    <property type="match status" value="1"/>
</dbReference>
<dbReference type="InterPro" id="IPR006132">
    <property type="entry name" value="Asp/Orn_carbamoyltranf_P-bd"/>
</dbReference>
<dbReference type="InterPro" id="IPR006130">
    <property type="entry name" value="Asp/Orn_carbamoylTrfase"/>
</dbReference>
<dbReference type="InterPro" id="IPR036901">
    <property type="entry name" value="Asp/Orn_carbamoylTrfase_sf"/>
</dbReference>
<dbReference type="InterPro" id="IPR002082">
    <property type="entry name" value="Asp_carbamoyltransf"/>
</dbReference>
<dbReference type="InterPro" id="IPR006131">
    <property type="entry name" value="Asp_carbamoyltransf_Asp/Orn-bd"/>
</dbReference>
<dbReference type="NCBIfam" id="TIGR00670">
    <property type="entry name" value="asp_carb_tr"/>
    <property type="match status" value="1"/>
</dbReference>
<dbReference type="NCBIfam" id="NF002032">
    <property type="entry name" value="PRK00856.1"/>
    <property type="match status" value="1"/>
</dbReference>
<dbReference type="PANTHER" id="PTHR45753:SF6">
    <property type="entry name" value="ASPARTATE CARBAMOYLTRANSFERASE"/>
    <property type="match status" value="1"/>
</dbReference>
<dbReference type="PANTHER" id="PTHR45753">
    <property type="entry name" value="ORNITHINE CARBAMOYLTRANSFERASE, MITOCHONDRIAL"/>
    <property type="match status" value="1"/>
</dbReference>
<dbReference type="Pfam" id="PF00185">
    <property type="entry name" value="OTCace"/>
    <property type="match status" value="1"/>
</dbReference>
<dbReference type="Pfam" id="PF02729">
    <property type="entry name" value="OTCace_N"/>
    <property type="match status" value="1"/>
</dbReference>
<dbReference type="PRINTS" id="PR00100">
    <property type="entry name" value="AOTCASE"/>
</dbReference>
<dbReference type="PRINTS" id="PR00101">
    <property type="entry name" value="ATCASE"/>
</dbReference>
<dbReference type="SUPFAM" id="SSF53671">
    <property type="entry name" value="Aspartate/ornithine carbamoyltransferase"/>
    <property type="match status" value="1"/>
</dbReference>
<dbReference type="PROSITE" id="PS00097">
    <property type="entry name" value="CARBAMOYLTRANSFERASE"/>
    <property type="match status" value="1"/>
</dbReference>
<comment type="function">
    <text evidence="1">Catalyzes the condensation of carbamoyl phosphate and aspartate to form carbamoyl aspartate and inorganic phosphate, the committed step in the de novo pyrimidine nucleotide biosynthesis pathway.</text>
</comment>
<comment type="catalytic activity">
    <reaction evidence="1">
        <text>carbamoyl phosphate + L-aspartate = N-carbamoyl-L-aspartate + phosphate + H(+)</text>
        <dbReference type="Rhea" id="RHEA:20013"/>
        <dbReference type="ChEBI" id="CHEBI:15378"/>
        <dbReference type="ChEBI" id="CHEBI:29991"/>
        <dbReference type="ChEBI" id="CHEBI:32814"/>
        <dbReference type="ChEBI" id="CHEBI:43474"/>
        <dbReference type="ChEBI" id="CHEBI:58228"/>
        <dbReference type="EC" id="2.1.3.2"/>
    </reaction>
</comment>
<comment type="pathway">
    <text evidence="1">Pyrimidine metabolism; UMP biosynthesis via de novo pathway; (S)-dihydroorotate from bicarbonate: step 2/3.</text>
</comment>
<comment type="subunit">
    <text evidence="1">Heterododecamer (2C3:3R2) of six catalytic PyrB chains organized as two trimers (C3), and six regulatory PyrI chains organized as three dimers (R2).</text>
</comment>
<comment type="similarity">
    <text evidence="1">Belongs to the aspartate/ornithine carbamoyltransferase superfamily. ATCase family.</text>
</comment>
<comment type="sequence caution" evidence="2">
    <conflict type="erroneous initiation">
        <sequence resource="EMBL-CDS" id="BAF39540"/>
    </conflict>
</comment>
<organism>
    <name type="scientific">Bifidobacterium adolescentis (strain ATCC 15703 / DSM 20083 / NCTC 11814 / E194a)</name>
    <dbReference type="NCBI Taxonomy" id="367928"/>
    <lineage>
        <taxon>Bacteria</taxon>
        <taxon>Bacillati</taxon>
        <taxon>Actinomycetota</taxon>
        <taxon>Actinomycetes</taxon>
        <taxon>Bifidobacteriales</taxon>
        <taxon>Bifidobacteriaceae</taxon>
        <taxon>Bifidobacterium</taxon>
    </lineage>
</organism>
<proteinExistence type="inferred from homology"/>
<feature type="chain" id="PRO_0000321075" description="Aspartate carbamoyltransferase catalytic subunit">
    <location>
        <begin position="1"/>
        <end position="320"/>
    </location>
</feature>
<feature type="binding site" evidence="1">
    <location>
        <position position="53"/>
    </location>
    <ligand>
        <name>carbamoyl phosphate</name>
        <dbReference type="ChEBI" id="CHEBI:58228"/>
    </ligand>
</feature>
<feature type="binding site" evidence="1">
    <location>
        <position position="54"/>
    </location>
    <ligand>
        <name>carbamoyl phosphate</name>
        <dbReference type="ChEBI" id="CHEBI:58228"/>
    </ligand>
</feature>
<feature type="binding site" evidence="1">
    <location>
        <position position="82"/>
    </location>
    <ligand>
        <name>L-aspartate</name>
        <dbReference type="ChEBI" id="CHEBI:29991"/>
    </ligand>
</feature>
<feature type="binding site" evidence="1">
    <location>
        <position position="103"/>
    </location>
    <ligand>
        <name>carbamoyl phosphate</name>
        <dbReference type="ChEBI" id="CHEBI:58228"/>
    </ligand>
</feature>
<feature type="binding site" evidence="1">
    <location>
        <position position="131"/>
    </location>
    <ligand>
        <name>carbamoyl phosphate</name>
        <dbReference type="ChEBI" id="CHEBI:58228"/>
    </ligand>
</feature>
<feature type="binding site" evidence="1">
    <location>
        <position position="134"/>
    </location>
    <ligand>
        <name>carbamoyl phosphate</name>
        <dbReference type="ChEBI" id="CHEBI:58228"/>
    </ligand>
</feature>
<feature type="binding site" evidence="1">
    <location>
        <position position="164"/>
    </location>
    <ligand>
        <name>L-aspartate</name>
        <dbReference type="ChEBI" id="CHEBI:29991"/>
    </ligand>
</feature>
<feature type="binding site" evidence="1">
    <location>
        <position position="227"/>
    </location>
    <ligand>
        <name>L-aspartate</name>
        <dbReference type="ChEBI" id="CHEBI:29991"/>
    </ligand>
</feature>
<feature type="binding site" evidence="1">
    <location>
        <position position="266"/>
    </location>
    <ligand>
        <name>carbamoyl phosphate</name>
        <dbReference type="ChEBI" id="CHEBI:58228"/>
    </ligand>
</feature>
<feature type="binding site" evidence="1">
    <location>
        <position position="267"/>
    </location>
    <ligand>
        <name>carbamoyl phosphate</name>
        <dbReference type="ChEBI" id="CHEBI:58228"/>
    </ligand>
</feature>
<keyword id="KW-0665">Pyrimidine biosynthesis</keyword>
<keyword id="KW-1185">Reference proteome</keyword>
<keyword id="KW-0808">Transferase</keyword>
<accession>A1A1F7</accession>